<gene>
    <name evidence="1" type="primary">atpI</name>
</gene>
<keyword id="KW-0066">ATP synthesis</keyword>
<keyword id="KW-0138">CF(0)</keyword>
<keyword id="KW-0150">Chloroplast</keyword>
<keyword id="KW-0375">Hydrogen ion transport</keyword>
<keyword id="KW-0406">Ion transport</keyword>
<keyword id="KW-0472">Membrane</keyword>
<keyword id="KW-0934">Plastid</keyword>
<keyword id="KW-0793">Thylakoid</keyword>
<keyword id="KW-0812">Transmembrane</keyword>
<keyword id="KW-1133">Transmembrane helix</keyword>
<keyword id="KW-0813">Transport</keyword>
<proteinExistence type="inferred from homology"/>
<feature type="chain" id="PRO_0000362557" description="ATP synthase subunit a, chloroplastic">
    <location>
        <begin position="1"/>
        <end position="244"/>
    </location>
</feature>
<feature type="transmembrane region" description="Helical" evidence="1">
    <location>
        <begin position="35"/>
        <end position="55"/>
    </location>
</feature>
<feature type="transmembrane region" description="Helical" evidence="1">
    <location>
        <begin position="92"/>
        <end position="112"/>
    </location>
</feature>
<feature type="transmembrane region" description="Helical" evidence="1">
    <location>
        <begin position="131"/>
        <end position="151"/>
    </location>
</feature>
<feature type="transmembrane region" description="Helical" evidence="1">
    <location>
        <begin position="196"/>
        <end position="216"/>
    </location>
</feature>
<feature type="transmembrane region" description="Helical" evidence="1">
    <location>
        <begin position="217"/>
        <end position="237"/>
    </location>
</feature>
<accession>A0ZZ23</accession>
<dbReference type="EMBL" id="AP009123">
    <property type="protein sequence ID" value="BAF41235.1"/>
    <property type="molecule type" value="Genomic_DNA"/>
</dbReference>
<dbReference type="RefSeq" id="YP_913175.1">
    <property type="nucleotide sequence ID" value="NC_008641.1"/>
</dbReference>
<dbReference type="SMR" id="A0ZZ23"/>
<dbReference type="GeneID" id="4575189"/>
<dbReference type="GO" id="GO:0009535">
    <property type="term" value="C:chloroplast thylakoid membrane"/>
    <property type="evidence" value="ECO:0007669"/>
    <property type="project" value="UniProtKB-SubCell"/>
</dbReference>
<dbReference type="GO" id="GO:0005886">
    <property type="term" value="C:plasma membrane"/>
    <property type="evidence" value="ECO:0007669"/>
    <property type="project" value="UniProtKB-UniRule"/>
</dbReference>
<dbReference type="GO" id="GO:0045259">
    <property type="term" value="C:proton-transporting ATP synthase complex"/>
    <property type="evidence" value="ECO:0007669"/>
    <property type="project" value="UniProtKB-KW"/>
</dbReference>
<dbReference type="GO" id="GO:0046933">
    <property type="term" value="F:proton-transporting ATP synthase activity, rotational mechanism"/>
    <property type="evidence" value="ECO:0007669"/>
    <property type="project" value="UniProtKB-UniRule"/>
</dbReference>
<dbReference type="CDD" id="cd00310">
    <property type="entry name" value="ATP-synt_Fo_a_6"/>
    <property type="match status" value="1"/>
</dbReference>
<dbReference type="FunFam" id="1.20.120.220:FF:000001">
    <property type="entry name" value="ATP synthase subunit a, chloroplastic"/>
    <property type="match status" value="1"/>
</dbReference>
<dbReference type="Gene3D" id="1.20.120.220">
    <property type="entry name" value="ATP synthase, F0 complex, subunit A"/>
    <property type="match status" value="1"/>
</dbReference>
<dbReference type="HAMAP" id="MF_01393">
    <property type="entry name" value="ATP_synth_a_bact"/>
    <property type="match status" value="1"/>
</dbReference>
<dbReference type="InterPro" id="IPR045082">
    <property type="entry name" value="ATP_syn_F0_a_bact/chloroplast"/>
</dbReference>
<dbReference type="InterPro" id="IPR000568">
    <property type="entry name" value="ATP_synth_F0_asu"/>
</dbReference>
<dbReference type="InterPro" id="IPR023011">
    <property type="entry name" value="ATP_synth_F0_asu_AS"/>
</dbReference>
<dbReference type="InterPro" id="IPR035908">
    <property type="entry name" value="F0_ATP_A_sf"/>
</dbReference>
<dbReference type="NCBIfam" id="TIGR01131">
    <property type="entry name" value="ATP_synt_6_or_A"/>
    <property type="match status" value="1"/>
</dbReference>
<dbReference type="PANTHER" id="PTHR42823">
    <property type="entry name" value="ATP SYNTHASE SUBUNIT A, CHLOROPLASTIC"/>
    <property type="match status" value="1"/>
</dbReference>
<dbReference type="PANTHER" id="PTHR42823:SF3">
    <property type="entry name" value="ATP SYNTHASE SUBUNIT A, CHLOROPLASTIC"/>
    <property type="match status" value="1"/>
</dbReference>
<dbReference type="Pfam" id="PF00119">
    <property type="entry name" value="ATP-synt_A"/>
    <property type="match status" value="1"/>
</dbReference>
<dbReference type="PRINTS" id="PR00123">
    <property type="entry name" value="ATPASEA"/>
</dbReference>
<dbReference type="SUPFAM" id="SSF81336">
    <property type="entry name" value="F1F0 ATP synthase subunit A"/>
    <property type="match status" value="1"/>
</dbReference>
<dbReference type="PROSITE" id="PS00449">
    <property type="entry name" value="ATPASE_A"/>
    <property type="match status" value="1"/>
</dbReference>
<comment type="function">
    <text evidence="1">Key component of the proton channel; it plays a direct role in the translocation of protons across the membrane.</text>
</comment>
<comment type="subunit">
    <text evidence="1">F-type ATPases have 2 components, CF(1) - the catalytic core - and CF(0) - the membrane proton channel. CF(1) has five subunits: alpha(3), beta(3), gamma(1), delta(1), epsilon(1). CF(0) has four main subunits: a, b, b' and c.</text>
</comment>
<comment type="subcellular location">
    <subcellularLocation>
        <location evidence="1">Plastid</location>
        <location evidence="1">Chloroplast thylakoid membrane</location>
        <topology evidence="1">Multi-pass membrane protein</topology>
    </subcellularLocation>
</comment>
<comment type="similarity">
    <text evidence="1">Belongs to the ATPase A chain family.</text>
</comment>
<name>ATPI_GOSBA</name>
<organism>
    <name type="scientific">Gossypium barbadense</name>
    <name type="common">Sea Island cotton</name>
    <name type="synonym">Hibiscus barbadensis</name>
    <dbReference type="NCBI Taxonomy" id="3634"/>
    <lineage>
        <taxon>Eukaryota</taxon>
        <taxon>Viridiplantae</taxon>
        <taxon>Streptophyta</taxon>
        <taxon>Embryophyta</taxon>
        <taxon>Tracheophyta</taxon>
        <taxon>Spermatophyta</taxon>
        <taxon>Magnoliopsida</taxon>
        <taxon>eudicotyledons</taxon>
        <taxon>Gunneridae</taxon>
        <taxon>Pentapetalae</taxon>
        <taxon>rosids</taxon>
        <taxon>malvids</taxon>
        <taxon>Malvales</taxon>
        <taxon>Malvaceae</taxon>
        <taxon>Malvoideae</taxon>
        <taxon>Gossypium</taxon>
    </lineage>
</organism>
<evidence type="ECO:0000255" key="1">
    <source>
        <dbReference type="HAMAP-Rule" id="MF_01393"/>
    </source>
</evidence>
<reference key="1">
    <citation type="journal article" date="2006" name="Genes Genet. Syst.">
        <title>Complete nucleotide sequence of the cotton (Gossypium barbadense L.) chloroplast genome with a comparative analysis of sequences among 9 dicot plants.</title>
        <authorList>
            <person name="Ibrahim R.I.H."/>
            <person name="Azuma J."/>
            <person name="Sakamoto M."/>
        </authorList>
    </citation>
    <scope>NUCLEOTIDE SEQUENCE [LARGE SCALE GENOMIC DNA]</scope>
</reference>
<protein>
    <recommendedName>
        <fullName evidence="1">ATP synthase subunit a, chloroplastic</fullName>
    </recommendedName>
    <alternativeName>
        <fullName evidence="1">ATP synthase F0 sector subunit a</fullName>
    </alternativeName>
    <alternativeName>
        <fullName evidence="1">F-ATPase subunit IV</fullName>
    </alternativeName>
</protein>
<geneLocation type="chloroplast"/>
<sequence length="244" mass="26689">MNGISNALNGLYDISGVEVGQHFYWQIAGFQVHAQVLITSWVVIAILLGSAVIAVRNPQTIPTAGQNFFEYVLEFIRDVSKTQIGEEYGPWVPFIGTMFLFIFVSNWSGALLPWKIIQLPHGELAAPTNDINTTVALALLTSVAYFYAGLSKKGLGYFSKYIQPTPILLPINILEDFTKPLSLSFRLFGNILADELVVVVLVSLVPSVVPIPVMFLGLFISGIQALIFATLAAAYIGESMEGHH</sequence>